<name>AROK_ECOLU</name>
<dbReference type="EC" id="2.7.1.71" evidence="1"/>
<dbReference type="EMBL" id="CU928163">
    <property type="protein sequence ID" value="CAR14994.1"/>
    <property type="molecule type" value="Genomic_DNA"/>
</dbReference>
<dbReference type="RefSeq" id="WP_000818618.1">
    <property type="nucleotide sequence ID" value="NC_011751.1"/>
</dbReference>
<dbReference type="RefSeq" id="YP_002414499.1">
    <property type="nucleotide sequence ID" value="NC_011751.1"/>
</dbReference>
<dbReference type="SMR" id="B7NDZ4"/>
<dbReference type="STRING" id="585056.ECUMN_3848"/>
<dbReference type="GeneID" id="93778608"/>
<dbReference type="KEGG" id="eum:ECUMN_3848"/>
<dbReference type="PATRIC" id="fig|585056.7.peg.4019"/>
<dbReference type="HOGENOM" id="CLU_057607_2_2_6"/>
<dbReference type="UniPathway" id="UPA00053">
    <property type="reaction ID" value="UER00088"/>
</dbReference>
<dbReference type="Proteomes" id="UP000007097">
    <property type="component" value="Chromosome"/>
</dbReference>
<dbReference type="GO" id="GO:0005829">
    <property type="term" value="C:cytosol"/>
    <property type="evidence" value="ECO:0007669"/>
    <property type="project" value="TreeGrafter"/>
</dbReference>
<dbReference type="GO" id="GO:0005524">
    <property type="term" value="F:ATP binding"/>
    <property type="evidence" value="ECO:0007669"/>
    <property type="project" value="UniProtKB-UniRule"/>
</dbReference>
<dbReference type="GO" id="GO:0000287">
    <property type="term" value="F:magnesium ion binding"/>
    <property type="evidence" value="ECO:0007669"/>
    <property type="project" value="UniProtKB-UniRule"/>
</dbReference>
<dbReference type="GO" id="GO:0004765">
    <property type="term" value="F:shikimate kinase activity"/>
    <property type="evidence" value="ECO:0007669"/>
    <property type="project" value="UniProtKB-UniRule"/>
</dbReference>
<dbReference type="GO" id="GO:0008652">
    <property type="term" value="P:amino acid biosynthetic process"/>
    <property type="evidence" value="ECO:0007669"/>
    <property type="project" value="UniProtKB-KW"/>
</dbReference>
<dbReference type="GO" id="GO:0009073">
    <property type="term" value="P:aromatic amino acid family biosynthetic process"/>
    <property type="evidence" value="ECO:0007669"/>
    <property type="project" value="UniProtKB-KW"/>
</dbReference>
<dbReference type="GO" id="GO:0009423">
    <property type="term" value="P:chorismate biosynthetic process"/>
    <property type="evidence" value="ECO:0007669"/>
    <property type="project" value="UniProtKB-UniRule"/>
</dbReference>
<dbReference type="CDD" id="cd00464">
    <property type="entry name" value="SK"/>
    <property type="match status" value="1"/>
</dbReference>
<dbReference type="FunFam" id="3.40.50.300:FF:000099">
    <property type="entry name" value="Shikimate kinase 1"/>
    <property type="match status" value="1"/>
</dbReference>
<dbReference type="Gene3D" id="3.40.50.300">
    <property type="entry name" value="P-loop containing nucleotide triphosphate hydrolases"/>
    <property type="match status" value="1"/>
</dbReference>
<dbReference type="HAMAP" id="MF_00109">
    <property type="entry name" value="Shikimate_kinase"/>
    <property type="match status" value="1"/>
</dbReference>
<dbReference type="InterPro" id="IPR027417">
    <property type="entry name" value="P-loop_NTPase"/>
</dbReference>
<dbReference type="InterPro" id="IPR031322">
    <property type="entry name" value="Shikimate/glucono_kinase"/>
</dbReference>
<dbReference type="InterPro" id="IPR000623">
    <property type="entry name" value="Shikimate_kinase/TSH1"/>
</dbReference>
<dbReference type="InterPro" id="IPR023000">
    <property type="entry name" value="Shikimate_kinase_CS"/>
</dbReference>
<dbReference type="NCBIfam" id="NF003456">
    <property type="entry name" value="PRK05057.1"/>
    <property type="match status" value="1"/>
</dbReference>
<dbReference type="PANTHER" id="PTHR21087">
    <property type="entry name" value="SHIKIMATE KINASE"/>
    <property type="match status" value="1"/>
</dbReference>
<dbReference type="PANTHER" id="PTHR21087:SF16">
    <property type="entry name" value="SHIKIMATE KINASE 1, CHLOROPLASTIC"/>
    <property type="match status" value="1"/>
</dbReference>
<dbReference type="Pfam" id="PF01202">
    <property type="entry name" value="SKI"/>
    <property type="match status" value="1"/>
</dbReference>
<dbReference type="PRINTS" id="PR01100">
    <property type="entry name" value="SHIKIMTKNASE"/>
</dbReference>
<dbReference type="SUPFAM" id="SSF52540">
    <property type="entry name" value="P-loop containing nucleoside triphosphate hydrolases"/>
    <property type="match status" value="1"/>
</dbReference>
<dbReference type="PROSITE" id="PS01128">
    <property type="entry name" value="SHIKIMATE_KINASE"/>
    <property type="match status" value="1"/>
</dbReference>
<gene>
    <name evidence="1" type="primary">aroK</name>
    <name type="ordered locus">ECUMN_3848</name>
</gene>
<protein>
    <recommendedName>
        <fullName evidence="1">Shikimate kinase 1</fullName>
        <shortName evidence="1">SK 1</shortName>
        <ecNumber evidence="1">2.7.1.71</ecNumber>
    </recommendedName>
</protein>
<organism>
    <name type="scientific">Escherichia coli O17:K52:H18 (strain UMN026 / ExPEC)</name>
    <dbReference type="NCBI Taxonomy" id="585056"/>
    <lineage>
        <taxon>Bacteria</taxon>
        <taxon>Pseudomonadati</taxon>
        <taxon>Pseudomonadota</taxon>
        <taxon>Gammaproteobacteria</taxon>
        <taxon>Enterobacterales</taxon>
        <taxon>Enterobacteriaceae</taxon>
        <taxon>Escherichia</taxon>
    </lineage>
</organism>
<sequence>MAEKRNIFLVGPMGAGKSTIGRQLAQQLNMEFYDSDQEIEKRTGADVGWVFDLEGEEGFRDREEKVINELTEKQGIVLATGGGSVKSRETRNRLSARGVVVYLETTIEKQLARTQRDKKRPLLHVETPPREVLEALANERNPLYEEIADVTIRTDDQSAKVVANQIIHMLESN</sequence>
<proteinExistence type="inferred from homology"/>
<reference key="1">
    <citation type="journal article" date="2009" name="PLoS Genet.">
        <title>Organised genome dynamics in the Escherichia coli species results in highly diverse adaptive paths.</title>
        <authorList>
            <person name="Touchon M."/>
            <person name="Hoede C."/>
            <person name="Tenaillon O."/>
            <person name="Barbe V."/>
            <person name="Baeriswyl S."/>
            <person name="Bidet P."/>
            <person name="Bingen E."/>
            <person name="Bonacorsi S."/>
            <person name="Bouchier C."/>
            <person name="Bouvet O."/>
            <person name="Calteau A."/>
            <person name="Chiapello H."/>
            <person name="Clermont O."/>
            <person name="Cruveiller S."/>
            <person name="Danchin A."/>
            <person name="Diard M."/>
            <person name="Dossat C."/>
            <person name="Karoui M.E."/>
            <person name="Frapy E."/>
            <person name="Garry L."/>
            <person name="Ghigo J.M."/>
            <person name="Gilles A.M."/>
            <person name="Johnson J."/>
            <person name="Le Bouguenec C."/>
            <person name="Lescat M."/>
            <person name="Mangenot S."/>
            <person name="Martinez-Jehanne V."/>
            <person name="Matic I."/>
            <person name="Nassif X."/>
            <person name="Oztas S."/>
            <person name="Petit M.A."/>
            <person name="Pichon C."/>
            <person name="Rouy Z."/>
            <person name="Ruf C.S."/>
            <person name="Schneider D."/>
            <person name="Tourret J."/>
            <person name="Vacherie B."/>
            <person name="Vallenet D."/>
            <person name="Medigue C."/>
            <person name="Rocha E.P.C."/>
            <person name="Denamur E."/>
        </authorList>
    </citation>
    <scope>NUCLEOTIDE SEQUENCE [LARGE SCALE GENOMIC DNA]</scope>
    <source>
        <strain>UMN026 / ExPEC</strain>
    </source>
</reference>
<comment type="function">
    <text evidence="1">Catalyzes the specific phosphorylation of the 3-hydroxyl group of shikimic acid using ATP as a cosubstrate.</text>
</comment>
<comment type="catalytic activity">
    <reaction evidence="1">
        <text>shikimate + ATP = 3-phosphoshikimate + ADP + H(+)</text>
        <dbReference type="Rhea" id="RHEA:13121"/>
        <dbReference type="ChEBI" id="CHEBI:15378"/>
        <dbReference type="ChEBI" id="CHEBI:30616"/>
        <dbReference type="ChEBI" id="CHEBI:36208"/>
        <dbReference type="ChEBI" id="CHEBI:145989"/>
        <dbReference type="ChEBI" id="CHEBI:456216"/>
        <dbReference type="EC" id="2.7.1.71"/>
    </reaction>
</comment>
<comment type="cofactor">
    <cofactor evidence="1">
        <name>Mg(2+)</name>
        <dbReference type="ChEBI" id="CHEBI:18420"/>
    </cofactor>
    <text evidence="1">Binds 1 Mg(2+) ion per subunit.</text>
</comment>
<comment type="pathway">
    <text evidence="1">Metabolic intermediate biosynthesis; chorismate biosynthesis; chorismate from D-erythrose 4-phosphate and phosphoenolpyruvate: step 5/7.</text>
</comment>
<comment type="subunit">
    <text evidence="1">Monomer.</text>
</comment>
<comment type="subcellular location">
    <subcellularLocation>
        <location evidence="1">Cytoplasm</location>
    </subcellularLocation>
</comment>
<comment type="similarity">
    <text evidence="1">Belongs to the shikimate kinase family.</text>
</comment>
<keyword id="KW-0028">Amino-acid biosynthesis</keyword>
<keyword id="KW-0057">Aromatic amino acid biosynthesis</keyword>
<keyword id="KW-0067">ATP-binding</keyword>
<keyword id="KW-0963">Cytoplasm</keyword>
<keyword id="KW-0418">Kinase</keyword>
<keyword id="KW-0460">Magnesium</keyword>
<keyword id="KW-0479">Metal-binding</keyword>
<keyword id="KW-0547">Nucleotide-binding</keyword>
<keyword id="KW-0808">Transferase</keyword>
<feature type="chain" id="PRO_1000117463" description="Shikimate kinase 1">
    <location>
        <begin position="1"/>
        <end position="173"/>
    </location>
</feature>
<feature type="binding site" evidence="1">
    <location>
        <begin position="14"/>
        <end position="19"/>
    </location>
    <ligand>
        <name>ATP</name>
        <dbReference type="ChEBI" id="CHEBI:30616"/>
    </ligand>
</feature>
<feature type="binding site" evidence="1">
    <location>
        <position position="18"/>
    </location>
    <ligand>
        <name>Mg(2+)</name>
        <dbReference type="ChEBI" id="CHEBI:18420"/>
    </ligand>
</feature>
<feature type="binding site" evidence="1">
    <location>
        <position position="36"/>
    </location>
    <ligand>
        <name>substrate</name>
    </ligand>
</feature>
<feature type="binding site" evidence="1">
    <location>
        <position position="60"/>
    </location>
    <ligand>
        <name>substrate</name>
    </ligand>
</feature>
<feature type="binding site" evidence="1">
    <location>
        <position position="82"/>
    </location>
    <ligand>
        <name>substrate</name>
    </ligand>
</feature>
<feature type="binding site" evidence="1">
    <location>
        <position position="120"/>
    </location>
    <ligand>
        <name>ATP</name>
        <dbReference type="ChEBI" id="CHEBI:30616"/>
    </ligand>
</feature>
<feature type="binding site" evidence="1">
    <location>
        <position position="140"/>
    </location>
    <ligand>
        <name>substrate</name>
    </ligand>
</feature>
<feature type="binding site" evidence="1">
    <location>
        <position position="157"/>
    </location>
    <ligand>
        <name>ATP</name>
        <dbReference type="ChEBI" id="CHEBI:30616"/>
    </ligand>
</feature>
<accession>B7NDZ4</accession>
<evidence type="ECO:0000255" key="1">
    <source>
        <dbReference type="HAMAP-Rule" id="MF_00109"/>
    </source>
</evidence>